<protein>
    <recommendedName>
        <fullName evidence="1">Ribonuclease HII</fullName>
        <shortName evidence="1">RNase HII</shortName>
        <ecNumber evidence="1">3.1.26.4</ecNumber>
    </recommendedName>
</protein>
<dbReference type="EC" id="3.1.26.4" evidence="1"/>
<dbReference type="EMBL" id="FM209186">
    <property type="protein sequence ID" value="CAW26121.1"/>
    <property type="molecule type" value="Genomic_DNA"/>
</dbReference>
<dbReference type="RefSeq" id="WP_003098580.1">
    <property type="nucleotide sequence ID" value="NC_011770.1"/>
</dbReference>
<dbReference type="SMR" id="B7V7U6"/>
<dbReference type="KEGG" id="pag:PLES_13931"/>
<dbReference type="HOGENOM" id="CLU_036532_3_2_6"/>
<dbReference type="GO" id="GO:0005737">
    <property type="term" value="C:cytoplasm"/>
    <property type="evidence" value="ECO:0007669"/>
    <property type="project" value="UniProtKB-SubCell"/>
</dbReference>
<dbReference type="GO" id="GO:0032299">
    <property type="term" value="C:ribonuclease H2 complex"/>
    <property type="evidence" value="ECO:0007669"/>
    <property type="project" value="TreeGrafter"/>
</dbReference>
<dbReference type="GO" id="GO:0030145">
    <property type="term" value="F:manganese ion binding"/>
    <property type="evidence" value="ECO:0007669"/>
    <property type="project" value="UniProtKB-UniRule"/>
</dbReference>
<dbReference type="GO" id="GO:0003723">
    <property type="term" value="F:RNA binding"/>
    <property type="evidence" value="ECO:0007669"/>
    <property type="project" value="InterPro"/>
</dbReference>
<dbReference type="GO" id="GO:0004523">
    <property type="term" value="F:RNA-DNA hybrid ribonuclease activity"/>
    <property type="evidence" value="ECO:0007669"/>
    <property type="project" value="UniProtKB-UniRule"/>
</dbReference>
<dbReference type="GO" id="GO:0043137">
    <property type="term" value="P:DNA replication, removal of RNA primer"/>
    <property type="evidence" value="ECO:0007669"/>
    <property type="project" value="TreeGrafter"/>
</dbReference>
<dbReference type="GO" id="GO:0006298">
    <property type="term" value="P:mismatch repair"/>
    <property type="evidence" value="ECO:0007669"/>
    <property type="project" value="TreeGrafter"/>
</dbReference>
<dbReference type="CDD" id="cd07182">
    <property type="entry name" value="RNase_HII_bacteria_HII_like"/>
    <property type="match status" value="1"/>
</dbReference>
<dbReference type="FunFam" id="3.30.420.10:FF:000006">
    <property type="entry name" value="Ribonuclease HII"/>
    <property type="match status" value="1"/>
</dbReference>
<dbReference type="Gene3D" id="3.30.420.10">
    <property type="entry name" value="Ribonuclease H-like superfamily/Ribonuclease H"/>
    <property type="match status" value="1"/>
</dbReference>
<dbReference type="HAMAP" id="MF_00052_B">
    <property type="entry name" value="RNase_HII_B"/>
    <property type="match status" value="1"/>
</dbReference>
<dbReference type="InterPro" id="IPR022898">
    <property type="entry name" value="RNase_HII"/>
</dbReference>
<dbReference type="InterPro" id="IPR001352">
    <property type="entry name" value="RNase_HII/HIII"/>
</dbReference>
<dbReference type="InterPro" id="IPR024567">
    <property type="entry name" value="RNase_HII/HIII_dom"/>
</dbReference>
<dbReference type="InterPro" id="IPR012337">
    <property type="entry name" value="RNaseH-like_sf"/>
</dbReference>
<dbReference type="InterPro" id="IPR036397">
    <property type="entry name" value="RNaseH_sf"/>
</dbReference>
<dbReference type="NCBIfam" id="NF000594">
    <property type="entry name" value="PRK00015.1-1"/>
    <property type="match status" value="1"/>
</dbReference>
<dbReference type="NCBIfam" id="NF000595">
    <property type="entry name" value="PRK00015.1-3"/>
    <property type="match status" value="1"/>
</dbReference>
<dbReference type="NCBIfam" id="NF000596">
    <property type="entry name" value="PRK00015.1-4"/>
    <property type="match status" value="1"/>
</dbReference>
<dbReference type="PANTHER" id="PTHR10954">
    <property type="entry name" value="RIBONUCLEASE H2 SUBUNIT A"/>
    <property type="match status" value="1"/>
</dbReference>
<dbReference type="PANTHER" id="PTHR10954:SF18">
    <property type="entry name" value="RIBONUCLEASE HII"/>
    <property type="match status" value="1"/>
</dbReference>
<dbReference type="Pfam" id="PF01351">
    <property type="entry name" value="RNase_HII"/>
    <property type="match status" value="1"/>
</dbReference>
<dbReference type="SUPFAM" id="SSF53098">
    <property type="entry name" value="Ribonuclease H-like"/>
    <property type="match status" value="1"/>
</dbReference>
<dbReference type="PROSITE" id="PS51975">
    <property type="entry name" value="RNASE_H_2"/>
    <property type="match status" value="1"/>
</dbReference>
<feature type="chain" id="PRO_1000116849" description="Ribonuclease HII">
    <location>
        <begin position="1"/>
        <end position="201"/>
    </location>
</feature>
<feature type="domain" description="RNase H type-2" evidence="2">
    <location>
        <begin position="12"/>
        <end position="201"/>
    </location>
</feature>
<feature type="binding site" evidence="1">
    <location>
        <position position="18"/>
    </location>
    <ligand>
        <name>a divalent metal cation</name>
        <dbReference type="ChEBI" id="CHEBI:60240"/>
    </ligand>
</feature>
<feature type="binding site" evidence="1">
    <location>
        <position position="19"/>
    </location>
    <ligand>
        <name>a divalent metal cation</name>
        <dbReference type="ChEBI" id="CHEBI:60240"/>
    </ligand>
</feature>
<feature type="binding site" evidence="1">
    <location>
        <position position="110"/>
    </location>
    <ligand>
        <name>a divalent metal cation</name>
        <dbReference type="ChEBI" id="CHEBI:60240"/>
    </ligand>
</feature>
<sequence>MQLGLDFNLVEDLVAGVDEVGRGPLCGPVVTAAVILDPSRPILGLNDSKKLSEARREALFEEIREKALAWCIARAEVEEIDRLNILHATMLAMQRAVEGLSVTPRLALIDGNRCPKLAVPCAPVVKGDSQVPAIAAASILAKVSRDREMVELDRVYPGYGMAGHKGYPTAVHLEALSRLGPTPIHRRSFAPVRELLDVSVQ</sequence>
<evidence type="ECO:0000255" key="1">
    <source>
        <dbReference type="HAMAP-Rule" id="MF_00052"/>
    </source>
</evidence>
<evidence type="ECO:0000255" key="2">
    <source>
        <dbReference type="PROSITE-ProRule" id="PRU01319"/>
    </source>
</evidence>
<reference key="1">
    <citation type="journal article" date="2009" name="Genome Res.">
        <title>Newly introduced genomic prophage islands are critical determinants of in vivo competitiveness in the Liverpool epidemic strain of Pseudomonas aeruginosa.</title>
        <authorList>
            <person name="Winstanley C."/>
            <person name="Langille M.G.I."/>
            <person name="Fothergill J.L."/>
            <person name="Kukavica-Ibrulj I."/>
            <person name="Paradis-Bleau C."/>
            <person name="Sanschagrin F."/>
            <person name="Thomson N.R."/>
            <person name="Winsor G.L."/>
            <person name="Quail M.A."/>
            <person name="Lennard N."/>
            <person name="Bignell A."/>
            <person name="Clarke L."/>
            <person name="Seeger K."/>
            <person name="Saunders D."/>
            <person name="Harris D."/>
            <person name="Parkhill J."/>
            <person name="Hancock R.E.W."/>
            <person name="Brinkman F.S.L."/>
            <person name="Levesque R.C."/>
        </authorList>
    </citation>
    <scope>NUCLEOTIDE SEQUENCE [LARGE SCALE GENOMIC DNA]</scope>
    <source>
        <strain>LESB58</strain>
    </source>
</reference>
<accession>B7V7U6</accession>
<proteinExistence type="inferred from homology"/>
<organism>
    <name type="scientific">Pseudomonas aeruginosa (strain LESB58)</name>
    <dbReference type="NCBI Taxonomy" id="557722"/>
    <lineage>
        <taxon>Bacteria</taxon>
        <taxon>Pseudomonadati</taxon>
        <taxon>Pseudomonadota</taxon>
        <taxon>Gammaproteobacteria</taxon>
        <taxon>Pseudomonadales</taxon>
        <taxon>Pseudomonadaceae</taxon>
        <taxon>Pseudomonas</taxon>
    </lineage>
</organism>
<keyword id="KW-0963">Cytoplasm</keyword>
<keyword id="KW-0255">Endonuclease</keyword>
<keyword id="KW-0378">Hydrolase</keyword>
<keyword id="KW-0464">Manganese</keyword>
<keyword id="KW-0479">Metal-binding</keyword>
<keyword id="KW-0540">Nuclease</keyword>
<name>RNH2_PSEA8</name>
<comment type="function">
    <text evidence="1">Endonuclease that specifically degrades the RNA of RNA-DNA hybrids.</text>
</comment>
<comment type="catalytic activity">
    <reaction evidence="1">
        <text>Endonucleolytic cleavage to 5'-phosphomonoester.</text>
        <dbReference type="EC" id="3.1.26.4"/>
    </reaction>
</comment>
<comment type="cofactor">
    <cofactor evidence="1">
        <name>Mn(2+)</name>
        <dbReference type="ChEBI" id="CHEBI:29035"/>
    </cofactor>
    <cofactor evidence="1">
        <name>Mg(2+)</name>
        <dbReference type="ChEBI" id="CHEBI:18420"/>
    </cofactor>
    <text evidence="1">Manganese or magnesium. Binds 1 divalent metal ion per monomer in the absence of substrate. May bind a second metal ion after substrate binding.</text>
</comment>
<comment type="subcellular location">
    <subcellularLocation>
        <location evidence="1">Cytoplasm</location>
    </subcellularLocation>
</comment>
<comment type="similarity">
    <text evidence="1">Belongs to the RNase HII family.</text>
</comment>
<gene>
    <name evidence="1" type="primary">rnhB</name>
    <name type="ordered locus">PLES_13931</name>
</gene>